<reference key="1">
    <citation type="journal article" date="2003" name="Oral Microbiol. Immunol.">
        <title>Helicobacter pylori and Campylobacter rectus share a common antigen.</title>
        <authorList>
            <person name="Tanabe S."/>
            <person name="Hinode D."/>
            <person name="Yokoyama M."/>
            <person name="Fukui M."/>
            <person name="Nakamura R."/>
            <person name="Yoshioka M."/>
            <person name="Grenier D."/>
            <person name="Mayrand D."/>
        </authorList>
    </citation>
    <scope>NUCLEOTIDE SEQUENCE [GENOMIC DNA]</scope>
</reference>
<accession>Q93GW2</accession>
<proteinExistence type="inferred from homology"/>
<evidence type="ECO:0000255" key="1">
    <source>
        <dbReference type="HAMAP-Rule" id="MF_00600"/>
    </source>
</evidence>
<organism>
    <name type="scientific">Campylobacter rectus</name>
    <name type="common">Wolinella recta</name>
    <dbReference type="NCBI Taxonomy" id="203"/>
    <lineage>
        <taxon>Bacteria</taxon>
        <taxon>Pseudomonadati</taxon>
        <taxon>Campylobacterota</taxon>
        <taxon>Epsilonproteobacteria</taxon>
        <taxon>Campylobacterales</taxon>
        <taxon>Campylobacteraceae</taxon>
        <taxon>Campylobacter</taxon>
    </lineage>
</organism>
<dbReference type="EC" id="5.6.1.7" evidence="1"/>
<dbReference type="EMBL" id="AB071388">
    <property type="protein sequence ID" value="BAB64927.1"/>
    <property type="molecule type" value="Genomic_DNA"/>
</dbReference>
<dbReference type="SMR" id="Q93GW2"/>
<dbReference type="GO" id="GO:0005737">
    <property type="term" value="C:cytoplasm"/>
    <property type="evidence" value="ECO:0007669"/>
    <property type="project" value="UniProtKB-SubCell"/>
</dbReference>
<dbReference type="GO" id="GO:0005524">
    <property type="term" value="F:ATP binding"/>
    <property type="evidence" value="ECO:0007669"/>
    <property type="project" value="UniProtKB-UniRule"/>
</dbReference>
<dbReference type="GO" id="GO:0140662">
    <property type="term" value="F:ATP-dependent protein folding chaperone"/>
    <property type="evidence" value="ECO:0007669"/>
    <property type="project" value="InterPro"/>
</dbReference>
<dbReference type="GO" id="GO:0016853">
    <property type="term" value="F:isomerase activity"/>
    <property type="evidence" value="ECO:0007669"/>
    <property type="project" value="UniProtKB-KW"/>
</dbReference>
<dbReference type="GO" id="GO:0051082">
    <property type="term" value="F:unfolded protein binding"/>
    <property type="evidence" value="ECO:0007669"/>
    <property type="project" value="UniProtKB-UniRule"/>
</dbReference>
<dbReference type="GO" id="GO:0042026">
    <property type="term" value="P:protein refolding"/>
    <property type="evidence" value="ECO:0007669"/>
    <property type="project" value="UniProtKB-UniRule"/>
</dbReference>
<dbReference type="CDD" id="cd03344">
    <property type="entry name" value="GroEL"/>
    <property type="match status" value="1"/>
</dbReference>
<dbReference type="FunFam" id="3.50.7.10:FF:000001">
    <property type="entry name" value="60 kDa chaperonin"/>
    <property type="match status" value="1"/>
</dbReference>
<dbReference type="Gene3D" id="3.50.7.10">
    <property type="entry name" value="GroEL"/>
    <property type="match status" value="1"/>
</dbReference>
<dbReference type="Gene3D" id="1.10.560.10">
    <property type="entry name" value="GroEL-like equatorial domain"/>
    <property type="match status" value="1"/>
</dbReference>
<dbReference type="Gene3D" id="3.30.260.10">
    <property type="entry name" value="TCP-1-like chaperonin intermediate domain"/>
    <property type="match status" value="1"/>
</dbReference>
<dbReference type="HAMAP" id="MF_00600">
    <property type="entry name" value="CH60"/>
    <property type="match status" value="1"/>
</dbReference>
<dbReference type="InterPro" id="IPR018370">
    <property type="entry name" value="Chaperonin_Cpn60_CS"/>
</dbReference>
<dbReference type="InterPro" id="IPR001844">
    <property type="entry name" value="Cpn60/GroEL"/>
</dbReference>
<dbReference type="InterPro" id="IPR002423">
    <property type="entry name" value="Cpn60/GroEL/TCP-1"/>
</dbReference>
<dbReference type="InterPro" id="IPR027409">
    <property type="entry name" value="GroEL-like_apical_dom_sf"/>
</dbReference>
<dbReference type="InterPro" id="IPR027413">
    <property type="entry name" value="GROEL-like_equatorial_sf"/>
</dbReference>
<dbReference type="InterPro" id="IPR027410">
    <property type="entry name" value="TCP-1-like_intermed_sf"/>
</dbReference>
<dbReference type="NCBIfam" id="TIGR02348">
    <property type="entry name" value="GroEL"/>
    <property type="match status" value="1"/>
</dbReference>
<dbReference type="NCBIfam" id="NF000592">
    <property type="entry name" value="PRK00013.1"/>
    <property type="match status" value="1"/>
</dbReference>
<dbReference type="NCBIfam" id="NF009487">
    <property type="entry name" value="PRK12849.1"/>
    <property type="match status" value="1"/>
</dbReference>
<dbReference type="NCBIfam" id="NF009488">
    <property type="entry name" value="PRK12850.1"/>
    <property type="match status" value="1"/>
</dbReference>
<dbReference type="NCBIfam" id="NF009489">
    <property type="entry name" value="PRK12851.1"/>
    <property type="match status" value="1"/>
</dbReference>
<dbReference type="PANTHER" id="PTHR45633">
    <property type="entry name" value="60 KDA HEAT SHOCK PROTEIN, MITOCHONDRIAL"/>
    <property type="match status" value="1"/>
</dbReference>
<dbReference type="Pfam" id="PF00118">
    <property type="entry name" value="Cpn60_TCP1"/>
    <property type="match status" value="1"/>
</dbReference>
<dbReference type="PRINTS" id="PR00298">
    <property type="entry name" value="CHAPERONIN60"/>
</dbReference>
<dbReference type="SUPFAM" id="SSF52029">
    <property type="entry name" value="GroEL apical domain-like"/>
    <property type="match status" value="1"/>
</dbReference>
<dbReference type="SUPFAM" id="SSF48592">
    <property type="entry name" value="GroEL equatorial domain-like"/>
    <property type="match status" value="1"/>
</dbReference>
<dbReference type="SUPFAM" id="SSF54849">
    <property type="entry name" value="GroEL-intermediate domain like"/>
    <property type="match status" value="1"/>
</dbReference>
<dbReference type="PROSITE" id="PS00296">
    <property type="entry name" value="CHAPERONINS_CPN60"/>
    <property type="match status" value="1"/>
</dbReference>
<gene>
    <name evidence="1" type="primary">groEL</name>
    <name evidence="1" type="synonym">groL</name>
</gene>
<comment type="function">
    <text evidence="1">Together with its co-chaperonin GroES, plays an essential role in assisting protein folding. The GroEL-GroES system forms a nano-cage that allows encapsulation of the non-native substrate proteins and provides a physical environment optimized to promote and accelerate protein folding.</text>
</comment>
<comment type="catalytic activity">
    <reaction evidence="1">
        <text>ATP + H2O + a folded polypeptide = ADP + phosphate + an unfolded polypeptide.</text>
        <dbReference type="EC" id="5.6.1.7"/>
    </reaction>
</comment>
<comment type="subunit">
    <text evidence="1">Forms a cylinder of 14 subunits composed of two heptameric rings stacked back-to-back. Interacts with the co-chaperonin GroES.</text>
</comment>
<comment type="subcellular location">
    <subcellularLocation>
        <location evidence="1">Cytoplasm</location>
    </subcellularLocation>
</comment>
<comment type="similarity">
    <text evidence="1">Belongs to the chaperonin (HSP60) family.</text>
</comment>
<feature type="chain" id="PRO_0000063613" description="Chaperonin GroEL">
    <location>
        <begin position="1"/>
        <end position="547"/>
    </location>
</feature>
<feature type="binding site" evidence="1">
    <location>
        <begin position="29"/>
        <end position="32"/>
    </location>
    <ligand>
        <name>ATP</name>
        <dbReference type="ChEBI" id="CHEBI:30616"/>
    </ligand>
</feature>
<feature type="binding site" evidence="1">
    <location>
        <position position="50"/>
    </location>
    <ligand>
        <name>ATP</name>
        <dbReference type="ChEBI" id="CHEBI:30616"/>
    </ligand>
</feature>
<feature type="binding site" evidence="1">
    <location>
        <begin position="86"/>
        <end position="90"/>
    </location>
    <ligand>
        <name>ATP</name>
        <dbReference type="ChEBI" id="CHEBI:30616"/>
    </ligand>
</feature>
<feature type="binding site" evidence="1">
    <location>
        <position position="414"/>
    </location>
    <ligand>
        <name>ATP</name>
        <dbReference type="ChEBI" id="CHEBI:30616"/>
    </ligand>
</feature>
<feature type="binding site" evidence="1">
    <location>
        <begin position="477"/>
        <end position="479"/>
    </location>
    <ligand>
        <name>ATP</name>
        <dbReference type="ChEBI" id="CHEBI:30616"/>
    </ligand>
</feature>
<feature type="binding site" evidence="1">
    <location>
        <position position="493"/>
    </location>
    <ligand>
        <name>ATP</name>
        <dbReference type="ChEBI" id="CHEBI:30616"/>
    </ligand>
</feature>
<keyword id="KW-0067">ATP-binding</keyword>
<keyword id="KW-0143">Chaperone</keyword>
<keyword id="KW-0963">Cytoplasm</keyword>
<keyword id="KW-0413">Isomerase</keyword>
<keyword id="KW-0547">Nucleotide-binding</keyword>
<name>CH60_CAMRE</name>
<protein>
    <recommendedName>
        <fullName evidence="1">Chaperonin GroEL</fullName>
        <ecNumber evidence="1">5.6.1.7</ecNumber>
    </recommendedName>
    <alternativeName>
        <fullName evidence="1">60 kDa chaperonin</fullName>
    </alternativeName>
    <alternativeName>
        <fullName evidence="1">Chaperonin-60</fullName>
        <shortName evidence="1">Cpn60</shortName>
    </alternativeName>
</protein>
<sequence>MAKEIFFSDEARNRLYEGVRKLNDAVKVTMGPRGRNVLVQKSFGAPAITKDGVSVAKEIELKDALENMGAGLVKEVASKTNDEAGDGTTTATVLAHSIFKEGLRNITAGANPVEVKRGMDKQAAAIIAELKNLSRKVTDKKEIAQVATISANSDSAIGGLIADAMEKVGKDGVITVEEAKSIQDELNVVEGMQFDRGYLSPYFITNAEKMQVELQSPYILLFDKKITNLKDLLPVLEQIQKTGKPLLIIAEDIEGEALATLVVNKLRGVLNISAVKAPGFGDRRKAMLEDIAILTGGEVVSEELGRTLESATLSDLGQASSVIIDKDNTTIVNGAGEKSAIDARIIQIKAQIAETTSDYDKEKLQERLAKLSGGVAVIKVGAATETEMKEKKDRVDDALSATKAAVEEGIVIGGGAAFIKAGAKVDLNLSGDEAIGADIVRRALTAPLRQIAENAGFDAGVVANSVSVSKDDNYGFNAATGEYVDMFKAGIIDPVKVERIALQNAVSVASLLLTTEATISELKEDKPMPAMPDMSGMGGMGGMGGMM</sequence>